<gene>
    <name type="ORF">TRIADDRAFT_32238</name>
</gene>
<accession>B3SAE4</accession>
<name>DNPH1_TRIAD</name>
<comment type="function">
    <text evidence="2">Catalyzes the cleavage of the N-glycosidic bond of deoxyribonucleoside 5'-monophosphates to yield deoxyribose 5-phosphate and a purine or pyrimidine base.</text>
</comment>
<comment type="catalytic activity">
    <reaction evidence="2">
        <text>a pyrimidine 2'-deoxyribonucleoside 5'-phosphate + H2O = a pyrimidine nucleobase + 2-deoxy-D-ribose 5-phosphate</text>
        <dbReference type="Rhea" id="RHEA:57852"/>
        <dbReference type="ChEBI" id="CHEBI:15377"/>
        <dbReference type="ChEBI" id="CHEBI:26432"/>
        <dbReference type="ChEBI" id="CHEBI:62877"/>
        <dbReference type="ChEBI" id="CHEBI:142209"/>
    </reaction>
</comment>
<comment type="catalytic activity">
    <reaction evidence="2">
        <text>a purine 2'-deoxyribonucleoside 5'-phosphate + H2O = a purine nucleobase + 2-deoxy-D-ribose 5-phosphate</text>
        <dbReference type="Rhea" id="RHEA:51132"/>
        <dbReference type="ChEBI" id="CHEBI:15377"/>
        <dbReference type="ChEBI" id="CHEBI:26386"/>
        <dbReference type="ChEBI" id="CHEBI:62877"/>
        <dbReference type="ChEBI" id="CHEBI:142198"/>
    </reaction>
</comment>
<comment type="subunit">
    <text evidence="2">Monomer and homodimer.</text>
</comment>
<comment type="subcellular location">
    <subcellularLocation>
        <location evidence="2">Cytoplasm</location>
    </subcellularLocation>
    <subcellularLocation>
        <location evidence="2">Nucleus</location>
    </subcellularLocation>
</comment>
<comment type="similarity">
    <text evidence="2">Belongs to the 2'-deoxynucleoside 5'-phosphate N-hydrolase 1 family.</text>
</comment>
<keyword id="KW-0963">Cytoplasm</keyword>
<keyword id="KW-0326">Glycosidase</keyword>
<keyword id="KW-0378">Hydrolase</keyword>
<keyword id="KW-0546">Nucleotide metabolism</keyword>
<keyword id="KW-0539">Nucleus</keyword>
<keyword id="KW-1185">Reference proteome</keyword>
<sequence>MAKRSIYFCGSIRGGRNDAQFYAKIIQHLKQYGDILTEHVGHCGPEEEGLDDKTIHDRDLAWLLQSDVIVAEVTQPSLGVGYELGRAIAADKLVLCLFRPDSGRRLSGMIRGAINSVNFFVEDYHQDEYASKIDQFFTVRVTRP</sequence>
<organism>
    <name type="scientific">Trichoplax adhaerens</name>
    <name type="common">Trichoplax reptans</name>
    <dbReference type="NCBI Taxonomy" id="10228"/>
    <lineage>
        <taxon>Eukaryota</taxon>
        <taxon>Metazoa</taxon>
        <taxon>Placozoa</taxon>
        <taxon>Uniplacotomia</taxon>
        <taxon>Trichoplacea</taxon>
        <taxon>Trichoplacidae</taxon>
        <taxon>Trichoplax</taxon>
    </lineage>
</organism>
<protein>
    <recommendedName>
        <fullName evidence="2">Putative 2'-deoxynucleoside 5'-phosphate N-hydrolase 1</fullName>
        <ecNumber evidence="2">3.2.2.-</ecNumber>
    </recommendedName>
</protein>
<proteinExistence type="inferred from homology"/>
<feature type="chain" id="PRO_0000379463" description="Putative 2'-deoxynucleoside 5'-phosphate N-hydrolase 1">
    <location>
        <begin position="1"/>
        <end position="144"/>
    </location>
</feature>
<feature type="binding site" description="in other chain" evidence="2">
    <location>
        <begin position="7"/>
        <end position="13"/>
    </location>
    <ligand>
        <name>substrate</name>
        <note>ligand shared between homodimeric partners</note>
    </ligand>
</feature>
<feature type="binding site" description="in other chain" evidence="2">
    <location>
        <position position="22"/>
    </location>
    <ligand>
        <name>substrate</name>
        <note>ligand shared between homodimeric partners</note>
    </ligand>
</feature>
<feature type="binding site" description="in other chain" evidence="1">
    <location>
        <position position="39"/>
    </location>
    <ligand>
        <name>substrate</name>
        <note>ligand shared between homodimeric partners</note>
    </ligand>
</feature>
<feature type="binding site" description="in other chain" evidence="2">
    <location>
        <position position="83"/>
    </location>
    <ligand>
        <name>substrate</name>
        <note>ligand shared between homodimeric partners</note>
    </ligand>
</feature>
<feature type="binding site" evidence="2">
    <location>
        <begin position="107"/>
        <end position="109"/>
    </location>
    <ligand>
        <name>substrate</name>
        <note>ligand shared between homodimeric partners</note>
    </ligand>
</feature>
<dbReference type="EC" id="3.2.2.-" evidence="2"/>
<dbReference type="EMBL" id="DS985261">
    <property type="protein sequence ID" value="EDV20245.1"/>
    <property type="molecule type" value="Genomic_DNA"/>
</dbReference>
<dbReference type="RefSeq" id="XP_002117195.1">
    <property type="nucleotide sequence ID" value="XM_002117159.1"/>
</dbReference>
<dbReference type="SMR" id="B3SAE4"/>
<dbReference type="FunCoup" id="B3SAE4">
    <property type="interactions" value="407"/>
</dbReference>
<dbReference type="STRING" id="10228.B3SAE4"/>
<dbReference type="EnsemblMetazoa" id="TriadT32238">
    <property type="protein sequence ID" value="TriadP32238"/>
    <property type="gene ID" value="TriadG32238"/>
</dbReference>
<dbReference type="GeneID" id="6758408"/>
<dbReference type="KEGG" id="tad:TRIADDRAFT_32238"/>
<dbReference type="CTD" id="6758408"/>
<dbReference type="eggNOG" id="ENOG502S2J2">
    <property type="taxonomic scope" value="Eukaryota"/>
</dbReference>
<dbReference type="HOGENOM" id="CLU_100069_1_0_1"/>
<dbReference type="InParanoid" id="B3SAE4"/>
<dbReference type="OMA" id="EVLSWHV"/>
<dbReference type="OrthoDB" id="18087at2759"/>
<dbReference type="PhylomeDB" id="B3SAE4"/>
<dbReference type="Proteomes" id="UP000009022">
    <property type="component" value="Unassembled WGS sequence"/>
</dbReference>
<dbReference type="GO" id="GO:0005737">
    <property type="term" value="C:cytoplasm"/>
    <property type="evidence" value="ECO:0007669"/>
    <property type="project" value="UniProtKB-SubCell"/>
</dbReference>
<dbReference type="GO" id="GO:0005634">
    <property type="term" value="C:nucleus"/>
    <property type="evidence" value="ECO:0000250"/>
    <property type="project" value="UniProtKB"/>
</dbReference>
<dbReference type="GO" id="GO:0070694">
    <property type="term" value="F:5-hydroxymethyl-dUMP N-hydrolase activity"/>
    <property type="evidence" value="ECO:0000250"/>
    <property type="project" value="UniProtKB"/>
</dbReference>
<dbReference type="GO" id="GO:0009159">
    <property type="term" value="P:deoxyribonucleoside monophosphate catabolic process"/>
    <property type="evidence" value="ECO:0000250"/>
    <property type="project" value="UniProtKB"/>
</dbReference>
<dbReference type="GO" id="GO:0009116">
    <property type="term" value="P:nucleoside metabolic process"/>
    <property type="evidence" value="ECO:0007669"/>
    <property type="project" value="UniProtKB-UniRule"/>
</dbReference>
<dbReference type="GO" id="GO:0009117">
    <property type="term" value="P:nucleotide metabolic process"/>
    <property type="evidence" value="ECO:0007669"/>
    <property type="project" value="UniProtKB-KW"/>
</dbReference>
<dbReference type="GO" id="GO:0030307">
    <property type="term" value="P:positive regulation of cell growth"/>
    <property type="evidence" value="ECO:0000250"/>
    <property type="project" value="UniProtKB"/>
</dbReference>
<dbReference type="FunFam" id="3.40.50.450:FF:000019">
    <property type="entry name" value="2'-deoxynucleoside 5'-phosphate N-hydrolase 1"/>
    <property type="match status" value="1"/>
</dbReference>
<dbReference type="Gene3D" id="3.40.50.450">
    <property type="match status" value="1"/>
</dbReference>
<dbReference type="HAMAP" id="MF_03036">
    <property type="entry name" value="Nuc_phosphate_hydrolase"/>
    <property type="match status" value="1"/>
</dbReference>
<dbReference type="InterPro" id="IPR051239">
    <property type="entry name" value="2'-dNMP_N-hydrolase"/>
</dbReference>
<dbReference type="InterPro" id="IPR028607">
    <property type="entry name" value="DNPH1"/>
</dbReference>
<dbReference type="InterPro" id="IPR007710">
    <property type="entry name" value="Nucleoside_deoxyribTrfase"/>
</dbReference>
<dbReference type="PANTHER" id="PTHR15364">
    <property type="entry name" value="2'-DEOXYNUCLEOSIDE 5'-PHOSPHATE N-HYDROLASE 1"/>
    <property type="match status" value="1"/>
</dbReference>
<dbReference type="PANTHER" id="PTHR15364:SF0">
    <property type="entry name" value="2'-DEOXYNUCLEOSIDE 5'-PHOSPHATE N-HYDROLASE 1"/>
    <property type="match status" value="1"/>
</dbReference>
<dbReference type="Pfam" id="PF05014">
    <property type="entry name" value="Nuc_deoxyrib_tr"/>
    <property type="match status" value="1"/>
</dbReference>
<dbReference type="SUPFAM" id="SSF52309">
    <property type="entry name" value="N-(deoxy)ribosyltransferase-like"/>
    <property type="match status" value="1"/>
</dbReference>
<reference key="1">
    <citation type="journal article" date="2008" name="Nature">
        <title>The Trichoplax genome and the nature of placozoans.</title>
        <authorList>
            <person name="Srivastava M."/>
            <person name="Begovic E."/>
            <person name="Chapman J."/>
            <person name="Putnam N.H."/>
            <person name="Hellsten U."/>
            <person name="Kawashima T."/>
            <person name="Kuo A."/>
            <person name="Mitros T."/>
            <person name="Salamov A."/>
            <person name="Carpenter M.L."/>
            <person name="Signorovitch A.Y."/>
            <person name="Moreno M.A."/>
            <person name="Kamm K."/>
            <person name="Grimwood J."/>
            <person name="Schmutz J."/>
            <person name="Shapiro H."/>
            <person name="Grigoriev I.V."/>
            <person name="Buss L.W."/>
            <person name="Schierwater B."/>
            <person name="Dellaporta S.L."/>
            <person name="Rokhsar D.S."/>
        </authorList>
    </citation>
    <scope>NUCLEOTIDE SEQUENCE [LARGE SCALE GENOMIC DNA]</scope>
    <source>
        <strain>Grell-BS-1999</strain>
    </source>
</reference>
<evidence type="ECO:0000250" key="1">
    <source>
        <dbReference type="UniProtKB" id="O35820"/>
    </source>
</evidence>
<evidence type="ECO:0000255" key="2">
    <source>
        <dbReference type="HAMAP-Rule" id="MF_03036"/>
    </source>
</evidence>